<comment type="function">
    <text evidence="1">The glycine cleavage system catalyzes the degradation of glycine. The H protein shuttles the methylamine group of glycine from the P protein to the T protein.</text>
</comment>
<comment type="function">
    <text evidence="1">Is also involved in protein lipoylation via its role as an octanoyl/lipoyl carrier protein intermediate.</text>
</comment>
<comment type="cofactor">
    <cofactor evidence="1">
        <name>(R)-lipoate</name>
        <dbReference type="ChEBI" id="CHEBI:83088"/>
    </cofactor>
    <text evidence="1">Binds 1 lipoyl cofactor covalently.</text>
</comment>
<comment type="subunit">
    <text evidence="1">The glycine cleavage system is composed of four proteins: P, T, L and H.</text>
</comment>
<comment type="similarity">
    <text evidence="1">Belongs to the GcvH family.</text>
</comment>
<reference key="1">
    <citation type="journal article" date="2008" name="Genome Biol.">
        <title>Encapsulated in silica: genome, proteome and physiology of the thermophilic bacterium Anoxybacillus flavithermus WK1.</title>
        <authorList>
            <person name="Saw J.H."/>
            <person name="Mountain B.W."/>
            <person name="Feng L."/>
            <person name="Omelchenko M.V."/>
            <person name="Hou S."/>
            <person name="Saito J.A."/>
            <person name="Stott M.B."/>
            <person name="Li D."/>
            <person name="Zhao G."/>
            <person name="Wu J."/>
            <person name="Galperin M.Y."/>
            <person name="Koonin E.V."/>
            <person name="Makarova K.S."/>
            <person name="Wolf Y.I."/>
            <person name="Rigden D.J."/>
            <person name="Dunfield P.F."/>
            <person name="Wang L."/>
            <person name="Alam M."/>
        </authorList>
    </citation>
    <scope>NUCLEOTIDE SEQUENCE [LARGE SCALE GENOMIC DNA]</scope>
    <source>
        <strain>DSM 21510 / WK1</strain>
    </source>
</reference>
<evidence type="ECO:0000255" key="1">
    <source>
        <dbReference type="HAMAP-Rule" id="MF_00272"/>
    </source>
</evidence>
<evidence type="ECO:0000255" key="2">
    <source>
        <dbReference type="PROSITE-ProRule" id="PRU01066"/>
    </source>
</evidence>
<proteinExistence type="inferred from homology"/>
<dbReference type="EMBL" id="CP000922">
    <property type="protein sequence ID" value="ACJ34835.1"/>
    <property type="molecule type" value="Genomic_DNA"/>
</dbReference>
<dbReference type="RefSeq" id="WP_006322727.1">
    <property type="nucleotide sequence ID" value="NC_011567.1"/>
</dbReference>
<dbReference type="SMR" id="B7GF88"/>
<dbReference type="STRING" id="491915.Aflv_2478"/>
<dbReference type="GeneID" id="7038751"/>
<dbReference type="KEGG" id="afl:Aflv_2478"/>
<dbReference type="eggNOG" id="COG0509">
    <property type="taxonomic scope" value="Bacteria"/>
</dbReference>
<dbReference type="HOGENOM" id="CLU_097408_2_2_9"/>
<dbReference type="Proteomes" id="UP000000742">
    <property type="component" value="Chromosome"/>
</dbReference>
<dbReference type="GO" id="GO:0005829">
    <property type="term" value="C:cytosol"/>
    <property type="evidence" value="ECO:0007669"/>
    <property type="project" value="TreeGrafter"/>
</dbReference>
<dbReference type="GO" id="GO:0005960">
    <property type="term" value="C:glycine cleavage complex"/>
    <property type="evidence" value="ECO:0007669"/>
    <property type="project" value="InterPro"/>
</dbReference>
<dbReference type="GO" id="GO:0019464">
    <property type="term" value="P:glycine decarboxylation via glycine cleavage system"/>
    <property type="evidence" value="ECO:0007669"/>
    <property type="project" value="UniProtKB-UniRule"/>
</dbReference>
<dbReference type="CDD" id="cd06848">
    <property type="entry name" value="GCS_H"/>
    <property type="match status" value="1"/>
</dbReference>
<dbReference type="Gene3D" id="2.40.50.100">
    <property type="match status" value="1"/>
</dbReference>
<dbReference type="HAMAP" id="MF_00272">
    <property type="entry name" value="GcvH"/>
    <property type="match status" value="1"/>
</dbReference>
<dbReference type="InterPro" id="IPR003016">
    <property type="entry name" value="2-oxoA_DH_lipoyl-BS"/>
</dbReference>
<dbReference type="InterPro" id="IPR000089">
    <property type="entry name" value="Biotin_lipoyl"/>
</dbReference>
<dbReference type="InterPro" id="IPR002930">
    <property type="entry name" value="GCV_H"/>
</dbReference>
<dbReference type="InterPro" id="IPR033753">
    <property type="entry name" value="GCV_H/Fam206"/>
</dbReference>
<dbReference type="InterPro" id="IPR017453">
    <property type="entry name" value="GCV_H_sub"/>
</dbReference>
<dbReference type="InterPro" id="IPR011053">
    <property type="entry name" value="Single_hybrid_motif"/>
</dbReference>
<dbReference type="NCBIfam" id="TIGR00527">
    <property type="entry name" value="gcvH"/>
    <property type="match status" value="1"/>
</dbReference>
<dbReference type="NCBIfam" id="NF002270">
    <property type="entry name" value="PRK01202.1"/>
    <property type="match status" value="1"/>
</dbReference>
<dbReference type="PANTHER" id="PTHR11715">
    <property type="entry name" value="GLYCINE CLEAVAGE SYSTEM H PROTEIN"/>
    <property type="match status" value="1"/>
</dbReference>
<dbReference type="PANTHER" id="PTHR11715:SF3">
    <property type="entry name" value="GLYCINE CLEAVAGE SYSTEM H PROTEIN-RELATED"/>
    <property type="match status" value="1"/>
</dbReference>
<dbReference type="Pfam" id="PF01597">
    <property type="entry name" value="GCV_H"/>
    <property type="match status" value="1"/>
</dbReference>
<dbReference type="SUPFAM" id="SSF51230">
    <property type="entry name" value="Single hybrid motif"/>
    <property type="match status" value="1"/>
</dbReference>
<dbReference type="PROSITE" id="PS50968">
    <property type="entry name" value="BIOTINYL_LIPOYL"/>
    <property type="match status" value="1"/>
</dbReference>
<dbReference type="PROSITE" id="PS00189">
    <property type="entry name" value="LIPOYL"/>
    <property type="match status" value="1"/>
</dbReference>
<protein>
    <recommendedName>
        <fullName evidence="1">Glycine cleavage system H protein</fullName>
    </recommendedName>
    <alternativeName>
        <fullName evidence="1">Octanoyl/lipoyl carrier protein</fullName>
    </alternativeName>
</protein>
<gene>
    <name evidence="1" type="primary">gcvH</name>
    <name type="ordered locus">Aflv_2478</name>
</gene>
<organism>
    <name type="scientific">Anoxybacillus flavithermus (strain DSM 21510 / WK1)</name>
    <dbReference type="NCBI Taxonomy" id="491915"/>
    <lineage>
        <taxon>Bacteria</taxon>
        <taxon>Bacillati</taxon>
        <taxon>Bacillota</taxon>
        <taxon>Bacilli</taxon>
        <taxon>Bacillales</taxon>
        <taxon>Anoxybacillaceae</taxon>
        <taxon>Anoxybacillus</taxon>
    </lineage>
</organism>
<keyword id="KW-0450">Lipoyl</keyword>
<feature type="chain" id="PRO_1000119290" description="Glycine cleavage system H protein">
    <location>
        <begin position="1"/>
        <end position="127"/>
    </location>
</feature>
<feature type="domain" description="Lipoyl-binding" evidence="2">
    <location>
        <begin position="22"/>
        <end position="104"/>
    </location>
</feature>
<feature type="modified residue" description="N6-lipoyllysine" evidence="1">
    <location>
        <position position="63"/>
    </location>
</feature>
<accession>B7GF88</accession>
<sequence>MSIPKELRYSQEHEWVRVEGNTVRIGITDFAQSELGDIVFVELPEVGAQLTANEPFGSVESVKTVSELYAPISGKVVAVNEELNDNPEYVNESPYDKAWMIVIEPSDLSEVDNLLTAEQYEQMINQD</sequence>
<name>GCSH_ANOFW</name>